<comment type="function">
    <text evidence="1">This magnesium-dependent enzyme catalyzes the hydrolysis of ATP coupled with the translocation of calcium from the cytosol out of the cell or into organelles.</text>
</comment>
<comment type="catalytic activity">
    <reaction>
        <text>Ca(2+)(in) + ATP + H2O = Ca(2+)(out) + ADP + phosphate + H(+)</text>
        <dbReference type="Rhea" id="RHEA:18105"/>
        <dbReference type="ChEBI" id="CHEBI:15377"/>
        <dbReference type="ChEBI" id="CHEBI:15378"/>
        <dbReference type="ChEBI" id="CHEBI:29108"/>
        <dbReference type="ChEBI" id="CHEBI:30616"/>
        <dbReference type="ChEBI" id="CHEBI:43474"/>
        <dbReference type="ChEBI" id="CHEBI:456216"/>
        <dbReference type="EC" id="7.2.2.10"/>
    </reaction>
</comment>
<comment type="activity regulation">
    <text evidence="1">Activated by calmodulin.</text>
</comment>
<comment type="subcellular location">
    <subcellularLocation>
        <location>Membrane</location>
        <topology>Multi-pass membrane protein</topology>
    </subcellularLocation>
</comment>
<comment type="domain">
    <text evidence="1">The N-terminus contains an autoinhibitory calmodulin-binding domain, which binds calmodulin in a calcium-dependent fashion.</text>
</comment>
<comment type="similarity">
    <text evidence="4">Belongs to the cation transport ATPase (P-type) (TC 3.A.3) family. Type IIB subfamily.</text>
</comment>
<accession>Q9LIK7</accession>
<sequence>MRRNVSDHAEKKDKVGVEVLLELPKTLSKSNKKWQLALIKLYCSRTLLNCAKHAIRKPGLFPRSLSYTAIDLDHHHGDDHFKIDTETLNDLVKNKNQEKLESLGGPNGLVSALKSNTRLGINEEGDEIQRRRSTFGSNTYTRQPSKGLFHFVVEAFKDLTILILLGCATLSLGFGIKEHGLKEGWYDGGSIFVAVFLVVAVSAVSNFRQNRQFDKLSKVSSNIKIDVVRNGRRQEISIFDIVVGDIVCLNIGDQVPADGVFVEGHLLHVDESSMTGESDHVEVSLTGNTFLFSGTKIADGFGKMAVTSVGMNTAWGQMMSHISRDTNEQTPLQSRLDKLTSSIGKVGLLVAFLVLLVLLIRYFTGTTKDESGNREYNGKTTKSDEIVNAVVKMVAAAVTIIVVAIPEGLPLAVTLTLAYSMKRMMKDNAMVRKLSACETMGSATVICTDKTGTLTLNQMKVTDFWFGLESGKASSVSQRVVELFHQGVAMNTTGSVFKAKAGTEYEFSGSPTEKAILSWAVEELEMGMEKVIEEHDVVHVEGFNSEKKRSGVLMKKKGVNTENNVVHWKGAAEKILAMCSTFCDGSGVVREMKEDDKIQFEKIIQSMAAKSLRCIAFAYSEDNEDNKKLKEEKLSLLGIIGIKDPCRPGVKKAVEDCQFAGVNIKMITGDNIFTARAIAVECGILTPEDEMNSEAVLEGEKFRNYTQEERLEKVERIKVMARSSPFDKLLMVKCLKELGHVVAVTGDGTNDAPALKEADIGLSMGIQGTEVAKESSDIVILDDNFASVATVLKWGRCVYNNIQKFIQFQLTVNVAALVINFVAAVSAGDVPLTAVQLLWVNLIMDTLGALALATEKPTNDLMKKKPIGRVAPLITNIMWRNLLAQAFYQISVLLVLQFRGRSIFNVTEKVKNTLIFNTFVLCQVFNEFNARSLEKKNVFKGLHKNRLFIGIIVVTVVLQVVMVEFLKRFADTERLNLGQWGVCIAIAAASWPIGWLVKSVPVPERHFFSYLKWKKRS</sequence>
<reference key="1">
    <citation type="journal article" date="2000" name="DNA Res.">
        <title>Structural analysis of Arabidopsis thaliana chromosome 3. II. Sequence features of the 4,251,695 bp regions covered by 90 P1, TAC and BAC clones.</title>
        <authorList>
            <person name="Kaneko T."/>
            <person name="Katoh T."/>
            <person name="Sato S."/>
            <person name="Nakamura Y."/>
            <person name="Asamizu E."/>
            <person name="Tabata S."/>
        </authorList>
    </citation>
    <scope>NUCLEOTIDE SEQUENCE [LARGE SCALE GENOMIC DNA]</scope>
    <source>
        <strain>cv. Columbia</strain>
    </source>
</reference>
<reference key="2">
    <citation type="journal article" date="2017" name="Plant J.">
        <title>Araport11: a complete reannotation of the Arabidopsis thaliana reference genome.</title>
        <authorList>
            <person name="Cheng C.Y."/>
            <person name="Krishnakumar V."/>
            <person name="Chan A.P."/>
            <person name="Thibaud-Nissen F."/>
            <person name="Schobel S."/>
            <person name="Town C.D."/>
        </authorList>
    </citation>
    <scope>GENOME REANNOTATION</scope>
    <source>
        <strain>cv. Columbia</strain>
    </source>
</reference>
<name>ACA13_ARATH</name>
<gene>
    <name type="primary">ACA13</name>
    <name type="ordered locus">At3g22910</name>
    <name type="ORF">F5N5.8</name>
</gene>
<proteinExistence type="inferred from homology"/>
<protein>
    <recommendedName>
        <fullName>Putative calcium-transporting ATPase 13, plasma membrane-type</fullName>
        <ecNumber>7.2.2.10</ecNumber>
    </recommendedName>
    <alternativeName>
        <fullName>Ca(2+)-ATPase isoform 13</fullName>
    </alternativeName>
</protein>
<feature type="chain" id="PRO_0000046419" description="Putative calcium-transporting ATPase 13, plasma membrane-type">
    <location>
        <begin position="1"/>
        <end position="1017"/>
    </location>
</feature>
<feature type="topological domain" description="Cytoplasmic" evidence="3">
    <location>
        <begin position="1"/>
        <end position="147"/>
    </location>
</feature>
<feature type="transmembrane region" description="Helical" evidence="3">
    <location>
        <begin position="148"/>
        <end position="168"/>
    </location>
</feature>
<feature type="topological domain" description="Lumenal" evidence="3">
    <location>
        <begin position="169"/>
        <end position="186"/>
    </location>
</feature>
<feature type="transmembrane region" description="Helical" evidence="3">
    <location>
        <begin position="187"/>
        <end position="207"/>
    </location>
</feature>
<feature type="topological domain" description="Cytoplasmic" evidence="3">
    <location>
        <begin position="208"/>
        <end position="336"/>
    </location>
</feature>
<feature type="transmembrane region" description="Helical" evidence="3">
    <location>
        <begin position="337"/>
        <end position="356"/>
    </location>
</feature>
<feature type="topological domain" description="Lumenal" evidence="3">
    <location>
        <begin position="357"/>
        <end position="393"/>
    </location>
</feature>
<feature type="transmembrane region" description="Helical" evidence="3">
    <location>
        <begin position="394"/>
        <end position="411"/>
    </location>
</feature>
<feature type="topological domain" description="Cytoplasmic" evidence="3">
    <location>
        <begin position="412"/>
        <end position="802"/>
    </location>
</feature>
<feature type="transmembrane region" description="Helical" evidence="3">
    <location>
        <begin position="803"/>
        <end position="821"/>
    </location>
</feature>
<feature type="topological domain" description="Lumenal" evidence="3">
    <location>
        <begin position="822"/>
        <end position="832"/>
    </location>
</feature>
<feature type="transmembrane region" description="Helical" evidence="3">
    <location>
        <begin position="833"/>
        <end position="853"/>
    </location>
</feature>
<feature type="topological domain" description="Cytoplasmic" evidence="3">
    <location>
        <begin position="854"/>
        <end position="873"/>
    </location>
</feature>
<feature type="transmembrane region" description="Helical" evidence="3">
    <location>
        <begin position="874"/>
        <end position="896"/>
    </location>
</feature>
<feature type="topological domain" description="Lumenal" evidence="3">
    <location>
        <begin position="897"/>
        <end position="905"/>
    </location>
</feature>
<feature type="transmembrane region" description="Helical" evidence="3">
    <location>
        <begin position="906"/>
        <end position="926"/>
    </location>
</feature>
<feature type="topological domain" description="Cytoplasmic" evidence="3">
    <location>
        <begin position="927"/>
        <end position="944"/>
    </location>
</feature>
<feature type="transmembrane region" description="Helical" evidence="3">
    <location>
        <begin position="945"/>
        <end position="966"/>
    </location>
</feature>
<feature type="topological domain" description="Lumenal" evidence="3">
    <location>
        <begin position="967"/>
        <end position="976"/>
    </location>
</feature>
<feature type="transmembrane region" description="Helical" evidence="3">
    <location>
        <begin position="977"/>
        <end position="998"/>
    </location>
</feature>
<feature type="topological domain" description="Cytoplasmic" evidence="3">
    <location>
        <begin position="999"/>
        <end position="1002"/>
    </location>
</feature>
<feature type="region of interest" description="Interaction with calmodulin" evidence="4">
    <location>
        <begin position="20"/>
        <end position="31"/>
    </location>
</feature>
<feature type="active site" description="4-aspartylphosphate intermediate" evidence="1">
    <location>
        <position position="449"/>
    </location>
</feature>
<feature type="binding site" evidence="1">
    <location>
        <position position="747"/>
    </location>
    <ligand>
        <name>Mg(2+)</name>
        <dbReference type="ChEBI" id="CHEBI:18420"/>
    </ligand>
</feature>
<feature type="binding site" evidence="1">
    <location>
        <position position="751"/>
    </location>
    <ligand>
        <name>Mg(2+)</name>
        <dbReference type="ChEBI" id="CHEBI:18420"/>
    </ligand>
</feature>
<feature type="modified residue" description="N-acetylmethionine" evidence="2">
    <location>
        <position position="1"/>
    </location>
</feature>
<dbReference type="EC" id="7.2.2.10"/>
<dbReference type="EMBL" id="AP001300">
    <property type="protein sequence ID" value="BAB03036.1"/>
    <property type="molecule type" value="Genomic_DNA"/>
</dbReference>
<dbReference type="EMBL" id="CP002686">
    <property type="protein sequence ID" value="AEE76690.1"/>
    <property type="molecule type" value="Genomic_DNA"/>
</dbReference>
<dbReference type="RefSeq" id="NP_188931.1">
    <property type="nucleotide sequence ID" value="NM_113191.2"/>
</dbReference>
<dbReference type="SMR" id="Q9LIK7"/>
<dbReference type="BioGRID" id="7195">
    <property type="interactions" value="1"/>
</dbReference>
<dbReference type="FunCoup" id="Q9LIK7">
    <property type="interactions" value="1762"/>
</dbReference>
<dbReference type="STRING" id="3702.Q9LIK7"/>
<dbReference type="iPTMnet" id="Q9LIK7"/>
<dbReference type="PaxDb" id="3702-AT3G22910.1"/>
<dbReference type="ProteomicsDB" id="244511"/>
<dbReference type="EnsemblPlants" id="AT3G22910.1">
    <property type="protein sequence ID" value="AT3G22910.1"/>
    <property type="gene ID" value="AT3G22910"/>
</dbReference>
<dbReference type="GeneID" id="821863"/>
<dbReference type="Gramene" id="AT3G22910.1">
    <property type="protein sequence ID" value="AT3G22910.1"/>
    <property type="gene ID" value="AT3G22910"/>
</dbReference>
<dbReference type="KEGG" id="ath:AT3G22910"/>
<dbReference type="Araport" id="AT3G22910"/>
<dbReference type="TAIR" id="AT3G22910">
    <property type="gene designation" value="ACA13"/>
</dbReference>
<dbReference type="eggNOG" id="KOG0204">
    <property type="taxonomic scope" value="Eukaryota"/>
</dbReference>
<dbReference type="HOGENOM" id="CLU_002360_9_2_1"/>
<dbReference type="InParanoid" id="Q9LIK7"/>
<dbReference type="OMA" id="RRSVVFN"/>
<dbReference type="PhylomeDB" id="Q9LIK7"/>
<dbReference type="BioCyc" id="ARA:AT3G22910-MONOMER"/>
<dbReference type="PRO" id="PR:Q9LIK7"/>
<dbReference type="Proteomes" id="UP000006548">
    <property type="component" value="Chromosome 3"/>
</dbReference>
<dbReference type="ExpressionAtlas" id="Q9LIK7">
    <property type="expression patterns" value="baseline and differential"/>
</dbReference>
<dbReference type="GO" id="GO:0016020">
    <property type="term" value="C:membrane"/>
    <property type="evidence" value="ECO:0007669"/>
    <property type="project" value="UniProtKB-SubCell"/>
</dbReference>
<dbReference type="GO" id="GO:0005524">
    <property type="term" value="F:ATP binding"/>
    <property type="evidence" value="ECO:0007669"/>
    <property type="project" value="UniProtKB-KW"/>
</dbReference>
<dbReference type="GO" id="GO:0016887">
    <property type="term" value="F:ATP hydrolysis activity"/>
    <property type="evidence" value="ECO:0007669"/>
    <property type="project" value="InterPro"/>
</dbReference>
<dbReference type="GO" id="GO:0005516">
    <property type="term" value="F:calmodulin binding"/>
    <property type="evidence" value="ECO:0007669"/>
    <property type="project" value="UniProtKB-KW"/>
</dbReference>
<dbReference type="GO" id="GO:0046872">
    <property type="term" value="F:metal ion binding"/>
    <property type="evidence" value="ECO:0007669"/>
    <property type="project" value="UniProtKB-KW"/>
</dbReference>
<dbReference type="GO" id="GO:0005388">
    <property type="term" value="F:P-type calcium transporter activity"/>
    <property type="evidence" value="ECO:0000250"/>
    <property type="project" value="TAIR"/>
</dbReference>
<dbReference type="FunFam" id="1.20.1110.10:FF:000039">
    <property type="entry name" value="Calcium-transporting ATPase"/>
    <property type="match status" value="1"/>
</dbReference>
<dbReference type="FunFam" id="2.70.150.10:FF:000006">
    <property type="entry name" value="Calcium-transporting ATPase"/>
    <property type="match status" value="1"/>
</dbReference>
<dbReference type="FunFam" id="3.40.1110.10:FF:000013">
    <property type="entry name" value="Calcium-transporting ATPase"/>
    <property type="match status" value="1"/>
</dbReference>
<dbReference type="FunFam" id="3.40.50.1000:FF:000018">
    <property type="entry name" value="Calcium-transporting ATPase"/>
    <property type="match status" value="1"/>
</dbReference>
<dbReference type="Gene3D" id="3.40.1110.10">
    <property type="entry name" value="Calcium-transporting ATPase, cytoplasmic domain N"/>
    <property type="match status" value="1"/>
</dbReference>
<dbReference type="Gene3D" id="2.70.150.10">
    <property type="entry name" value="Calcium-transporting ATPase, cytoplasmic transduction domain A"/>
    <property type="match status" value="1"/>
</dbReference>
<dbReference type="Gene3D" id="1.20.1110.10">
    <property type="entry name" value="Calcium-transporting ATPase, transmembrane domain"/>
    <property type="match status" value="1"/>
</dbReference>
<dbReference type="Gene3D" id="3.40.50.1000">
    <property type="entry name" value="HAD superfamily/HAD-like"/>
    <property type="match status" value="1"/>
</dbReference>
<dbReference type="InterPro" id="IPR006068">
    <property type="entry name" value="ATPase_P-typ_cation-transptr_C"/>
</dbReference>
<dbReference type="InterPro" id="IPR004014">
    <property type="entry name" value="ATPase_P-typ_cation-transptr_N"/>
</dbReference>
<dbReference type="InterPro" id="IPR023299">
    <property type="entry name" value="ATPase_P-typ_cyto_dom_N"/>
</dbReference>
<dbReference type="InterPro" id="IPR018303">
    <property type="entry name" value="ATPase_P-typ_P_site"/>
</dbReference>
<dbReference type="InterPro" id="IPR023298">
    <property type="entry name" value="ATPase_P-typ_TM_dom_sf"/>
</dbReference>
<dbReference type="InterPro" id="IPR008250">
    <property type="entry name" value="ATPase_P-typ_transduc_dom_A_sf"/>
</dbReference>
<dbReference type="InterPro" id="IPR036412">
    <property type="entry name" value="HAD-like_sf"/>
</dbReference>
<dbReference type="InterPro" id="IPR023214">
    <property type="entry name" value="HAD_sf"/>
</dbReference>
<dbReference type="InterPro" id="IPR006408">
    <property type="entry name" value="P-type_ATPase_IIB"/>
</dbReference>
<dbReference type="InterPro" id="IPR001757">
    <property type="entry name" value="P_typ_ATPase"/>
</dbReference>
<dbReference type="InterPro" id="IPR044492">
    <property type="entry name" value="P_typ_ATPase_HD_dom"/>
</dbReference>
<dbReference type="NCBIfam" id="TIGR01517">
    <property type="entry name" value="ATPase-IIB_Ca"/>
    <property type="match status" value="1"/>
</dbReference>
<dbReference type="NCBIfam" id="TIGR01494">
    <property type="entry name" value="ATPase_P-type"/>
    <property type="match status" value="3"/>
</dbReference>
<dbReference type="PANTHER" id="PTHR24093:SF434">
    <property type="entry name" value="CALCIUM-TRANSPORTING ATPASE 13, PLASMA MEMBRANE-TYPE-RELATED"/>
    <property type="match status" value="1"/>
</dbReference>
<dbReference type="PANTHER" id="PTHR24093">
    <property type="entry name" value="CATION TRANSPORTING ATPASE"/>
    <property type="match status" value="1"/>
</dbReference>
<dbReference type="Pfam" id="PF00689">
    <property type="entry name" value="Cation_ATPase_C"/>
    <property type="match status" value="1"/>
</dbReference>
<dbReference type="Pfam" id="PF00690">
    <property type="entry name" value="Cation_ATPase_N"/>
    <property type="match status" value="1"/>
</dbReference>
<dbReference type="Pfam" id="PF00122">
    <property type="entry name" value="E1-E2_ATPase"/>
    <property type="match status" value="1"/>
</dbReference>
<dbReference type="Pfam" id="PF00702">
    <property type="entry name" value="Hydrolase"/>
    <property type="match status" value="1"/>
</dbReference>
<dbReference type="PRINTS" id="PR00119">
    <property type="entry name" value="CATATPASE"/>
</dbReference>
<dbReference type="PRINTS" id="PR00120">
    <property type="entry name" value="HATPASE"/>
</dbReference>
<dbReference type="SFLD" id="SFLDG00002">
    <property type="entry name" value="C1.7:_P-type_atpase_like"/>
    <property type="match status" value="1"/>
</dbReference>
<dbReference type="SFLD" id="SFLDF00027">
    <property type="entry name" value="p-type_atpase"/>
    <property type="match status" value="1"/>
</dbReference>
<dbReference type="SMART" id="SM00831">
    <property type="entry name" value="Cation_ATPase_N"/>
    <property type="match status" value="1"/>
</dbReference>
<dbReference type="SUPFAM" id="SSF81653">
    <property type="entry name" value="Calcium ATPase, transduction domain A"/>
    <property type="match status" value="1"/>
</dbReference>
<dbReference type="SUPFAM" id="SSF81665">
    <property type="entry name" value="Calcium ATPase, transmembrane domain M"/>
    <property type="match status" value="1"/>
</dbReference>
<dbReference type="SUPFAM" id="SSF56784">
    <property type="entry name" value="HAD-like"/>
    <property type="match status" value="1"/>
</dbReference>
<dbReference type="SUPFAM" id="SSF81660">
    <property type="entry name" value="Metal cation-transporting ATPase, ATP-binding domain N"/>
    <property type="match status" value="1"/>
</dbReference>
<dbReference type="PROSITE" id="PS00154">
    <property type="entry name" value="ATPASE_E1_E2"/>
    <property type="match status" value="1"/>
</dbReference>
<keyword id="KW-0007">Acetylation</keyword>
<keyword id="KW-0067">ATP-binding</keyword>
<keyword id="KW-0106">Calcium</keyword>
<keyword id="KW-0109">Calcium transport</keyword>
<keyword id="KW-0112">Calmodulin-binding</keyword>
<keyword id="KW-0406">Ion transport</keyword>
<keyword id="KW-0460">Magnesium</keyword>
<keyword id="KW-0472">Membrane</keyword>
<keyword id="KW-0479">Metal-binding</keyword>
<keyword id="KW-0547">Nucleotide-binding</keyword>
<keyword id="KW-1185">Reference proteome</keyword>
<keyword id="KW-1278">Translocase</keyword>
<keyword id="KW-0812">Transmembrane</keyword>
<keyword id="KW-1133">Transmembrane helix</keyword>
<keyword id="KW-0813">Transport</keyword>
<evidence type="ECO:0000250" key="1"/>
<evidence type="ECO:0000250" key="2">
    <source>
        <dbReference type="UniProtKB" id="O81108"/>
    </source>
</evidence>
<evidence type="ECO:0000255" key="3"/>
<evidence type="ECO:0000305" key="4"/>
<organism>
    <name type="scientific">Arabidopsis thaliana</name>
    <name type="common">Mouse-ear cress</name>
    <dbReference type="NCBI Taxonomy" id="3702"/>
    <lineage>
        <taxon>Eukaryota</taxon>
        <taxon>Viridiplantae</taxon>
        <taxon>Streptophyta</taxon>
        <taxon>Embryophyta</taxon>
        <taxon>Tracheophyta</taxon>
        <taxon>Spermatophyta</taxon>
        <taxon>Magnoliopsida</taxon>
        <taxon>eudicotyledons</taxon>
        <taxon>Gunneridae</taxon>
        <taxon>Pentapetalae</taxon>
        <taxon>rosids</taxon>
        <taxon>malvids</taxon>
        <taxon>Brassicales</taxon>
        <taxon>Brassicaceae</taxon>
        <taxon>Camelineae</taxon>
        <taxon>Arabidopsis</taxon>
    </lineage>
</organism>